<reference key="1">
    <citation type="journal article" date="2007" name="J. Immunol.">
        <title>Extensive characterization of IFN-induced GTPases mGBP1 to mGBP10 involved in host defense.</title>
        <authorList>
            <person name="Degrandi D."/>
            <person name="Konermann C."/>
            <person name="Beuter-Gunia C."/>
            <person name="Kresse A."/>
            <person name="Wurthner J."/>
            <person name="Kurig S."/>
            <person name="Beer S."/>
            <person name="Pfeffer K."/>
        </authorList>
    </citation>
    <scope>NUCLEOTIDE SEQUENCE [MRNA]</scope>
    <scope>FUNCTION</scope>
    <source>
        <strain>C57BL/6J</strain>
        <tissue>Liver</tissue>
    </source>
</reference>
<reference key="2">
    <citation type="journal article" date="1991" name="J. Immunol.">
        <title>Identification and characterization of a new gene family induced during macrophage activation.</title>
        <authorList>
            <person name="Wynn T.A."/>
            <person name="Nicolet C.M."/>
            <person name="Paulnock D.M."/>
        </authorList>
    </citation>
    <scope>NUCLEOTIDE SEQUENCE [MRNA]</scope>
    <source>
        <strain>BALB/cJ</strain>
    </source>
</reference>
<reference key="3">
    <citation type="journal article" date="2009" name="PLoS Biol.">
        <title>Lineage-specific biology revealed by a finished genome assembly of the mouse.</title>
        <authorList>
            <person name="Church D.M."/>
            <person name="Goodstadt L."/>
            <person name="Hillier L.W."/>
            <person name="Zody M.C."/>
            <person name="Goldstein S."/>
            <person name="She X."/>
            <person name="Bult C.J."/>
            <person name="Agarwala R."/>
            <person name="Cherry J.L."/>
            <person name="DiCuccio M."/>
            <person name="Hlavina W."/>
            <person name="Kapustin Y."/>
            <person name="Meric P."/>
            <person name="Maglott D."/>
            <person name="Birtle Z."/>
            <person name="Marques A.C."/>
            <person name="Graves T."/>
            <person name="Zhou S."/>
            <person name="Teague B."/>
            <person name="Potamousis K."/>
            <person name="Churas C."/>
            <person name="Place M."/>
            <person name="Herschleb J."/>
            <person name="Runnheim R."/>
            <person name="Forrest D."/>
            <person name="Amos-Landgraf J."/>
            <person name="Schwartz D.C."/>
            <person name="Cheng Z."/>
            <person name="Lindblad-Toh K."/>
            <person name="Eichler E.E."/>
            <person name="Ponting C.P."/>
        </authorList>
    </citation>
    <scope>NUCLEOTIDE SEQUENCE [LARGE SCALE GENOMIC DNA]</scope>
    <source>
        <strain>C57BL/6J</strain>
    </source>
</reference>
<reference key="4">
    <citation type="journal article" date="2004" name="Genome Res.">
        <title>The status, quality, and expansion of the NIH full-length cDNA project: the Mammalian Gene Collection (MGC).</title>
        <authorList>
            <consortium name="The MGC Project Team"/>
        </authorList>
    </citation>
    <scope>NUCLEOTIDE SEQUENCE [LARGE SCALE MRNA] (ISOFORM 2)</scope>
    <source>
        <tissue>Brain</tissue>
    </source>
</reference>
<reference key="5">
    <citation type="journal article" date="2011" name="J. Immunol.">
        <title>Guanylate binding protein 4 negatively regulates virus-induced type I IFN and antiviral response by targeting IFN regulatory factor 7.</title>
        <authorList>
            <person name="Hu Y."/>
            <person name="Wang J."/>
            <person name="Yang B."/>
            <person name="Zheng N."/>
            <person name="Qin M."/>
            <person name="Ji Y."/>
            <person name="Lin G."/>
            <person name="Tian L."/>
            <person name="Wu X."/>
            <person name="Wu L."/>
            <person name="Sun B."/>
        </authorList>
    </citation>
    <scope>FUNCTION</scope>
    <scope>INTERACTION WITH IRF7</scope>
    <scope>TISSUE SPECIFICITY</scope>
    <scope>INDUCTION</scope>
</reference>
<proteinExistence type="evidence at protein level"/>
<organism>
    <name type="scientific">Mus musculus</name>
    <name type="common">Mouse</name>
    <dbReference type="NCBI Taxonomy" id="10090"/>
    <lineage>
        <taxon>Eukaryota</taxon>
        <taxon>Metazoa</taxon>
        <taxon>Chordata</taxon>
        <taxon>Craniata</taxon>
        <taxon>Vertebrata</taxon>
        <taxon>Euteleostomi</taxon>
        <taxon>Mammalia</taxon>
        <taxon>Eutheria</taxon>
        <taxon>Euarchontoglires</taxon>
        <taxon>Glires</taxon>
        <taxon>Rodentia</taxon>
        <taxon>Myomorpha</taxon>
        <taxon>Muroidea</taxon>
        <taxon>Muridae</taxon>
        <taxon>Murinae</taxon>
        <taxon>Mus</taxon>
        <taxon>Mus</taxon>
    </lineage>
</organism>
<sequence length="631" mass="72042">MTQPQMAPICLVENHNEQLSVNQEAIEILDKISQPVVVVAIVGWSHTGKSYLMNCLAGQNHVSGTLPTSQRFPSGLHRAVSDQGHLDVVHAPPHQARALVLLDTEGLGDVEKGDPKNDLWIFALSVLLSSTFVYNSMNTINHQALEQLHYVTELTELIRAKSSPNPHGIKNSTEFVSFFPDFVWTVRDFMLELKLNGEDITSDEYLENALKLIPGNNPRIQASNSARECIRRFFPNRKCFVFEWPTHDIELIKQLETISEDQLDPTFKESAMAFASYIFTYAKIKTLREGIKVTGNGLGTLVTTYVDAINSGAVPCLDDAVTTLAQRENSVAVQKAASHYSEQMAQRLSLPTDTIQELLDVHAACEKEAMAVFMEHSFKDENQQFLKKLVELLREKNGLFLLKNEEASDKYCQEELDRLSKDLMDNISTFSVPGGHRLYMDMREKIEHDYWQVPRKGVKASEVFQNFLQSQAIIESSILQADTALTAGQKAIAEKHTKKEAAEKEQDLLRQKQKEHQEYMEAQEKRNKENLEQLRRKLEQEREQLIKDHNMMLEKLTKEQKTFREEGYKTQAEELRREIHQLGHNIKEMKQNGDSLVESILRSWFSFISPPSESEKAISSVLSLLRKKDRL</sequence>
<protein>
    <recommendedName>
        <fullName>Guanylate-binding protein 4</fullName>
        <ecNumber evidence="1">3.6.5.-</ecNumber>
    </recommendedName>
    <alternativeName>
        <fullName>GTP-binding protein 4</fullName>
        <shortName>GBP-4</shortName>
    </alternativeName>
    <alternativeName>
        <fullName>Guanine nucleotide-binding protein 4</fullName>
    </alternativeName>
</protein>
<gene>
    <name evidence="7 9" type="primary">Gbp4</name>
</gene>
<dbReference type="EC" id="3.6.5.-" evidence="1"/>
<dbReference type="EMBL" id="EF494423">
    <property type="protein sequence ID" value="ABO88216.1"/>
    <property type="molecule type" value="mRNA"/>
</dbReference>
<dbReference type="EMBL" id="M81128">
    <property type="protein sequence ID" value="AAA37668.1"/>
    <property type="molecule type" value="mRNA"/>
</dbReference>
<dbReference type="EMBL" id="BC141364">
    <property type="protein sequence ID" value="AAI41365.1"/>
    <property type="molecule type" value="mRNA"/>
</dbReference>
<dbReference type="EMBL" id="BC147434">
    <property type="protein sequence ID" value="AAI47435.1"/>
    <property type="molecule type" value="mRNA"/>
</dbReference>
<dbReference type="CCDS" id="CCDS57368.1">
    <molecule id="A4UUI3-1"/>
</dbReference>
<dbReference type="PIR" id="I49684">
    <property type="entry name" value="I49684"/>
</dbReference>
<dbReference type="RefSeq" id="NP_001242934.1">
    <molecule id="A4UUI3-1"/>
    <property type="nucleotide sequence ID" value="NM_001256005.1"/>
</dbReference>
<dbReference type="RefSeq" id="NP_001346009.1">
    <molecule id="A4UUI3-2"/>
    <property type="nucleotide sequence ID" value="NM_001359080.1"/>
</dbReference>
<dbReference type="RefSeq" id="NP_001346010.1">
    <molecule id="A4UUI3-2"/>
    <property type="nucleotide sequence ID" value="NM_001359081.1"/>
</dbReference>
<dbReference type="RefSeq" id="NP_001346011.1">
    <molecule id="A4UUI3-2"/>
    <property type="nucleotide sequence ID" value="NM_001359082.1"/>
</dbReference>
<dbReference type="RefSeq" id="NP_032646.2">
    <molecule id="A4UUI3-2"/>
    <property type="nucleotide sequence ID" value="NM_008620.4"/>
</dbReference>
<dbReference type="RefSeq" id="XP_006534867.1">
    <molecule id="A4UUI3-1"/>
    <property type="nucleotide sequence ID" value="XM_006534804.4"/>
</dbReference>
<dbReference type="RefSeq" id="XP_006534868.1">
    <molecule id="A4UUI3-1"/>
    <property type="nucleotide sequence ID" value="XM_006534805.4"/>
</dbReference>
<dbReference type="RefSeq" id="XP_006534869.1">
    <property type="nucleotide sequence ID" value="XM_006534806.3"/>
</dbReference>
<dbReference type="RefSeq" id="XP_006534870.1">
    <property type="nucleotide sequence ID" value="XM_006534807.3"/>
</dbReference>
<dbReference type="RefSeq" id="XP_011247713.1">
    <molecule id="A4UUI3-1"/>
    <property type="nucleotide sequence ID" value="XM_011249411.4"/>
</dbReference>
<dbReference type="RefSeq" id="XP_017176191.1">
    <property type="nucleotide sequence ID" value="XM_017320702.1"/>
</dbReference>
<dbReference type="SMR" id="A4UUI3"/>
<dbReference type="FunCoup" id="A4UUI3">
    <property type="interactions" value="34"/>
</dbReference>
<dbReference type="STRING" id="10090.ENSMUSP00000098522"/>
<dbReference type="iPTMnet" id="A4UUI3"/>
<dbReference type="PhosphoSitePlus" id="A4UUI3"/>
<dbReference type="PaxDb" id="10090-ENSMUSP00000098522"/>
<dbReference type="PeptideAtlas" id="A4UUI3"/>
<dbReference type="ProteomicsDB" id="312513"/>
<dbReference type="ProteomicsDB" id="335379"/>
<dbReference type="ProteomicsDB" id="363498"/>
<dbReference type="DNASU" id="17472"/>
<dbReference type="Ensembl" id="ENSMUST00000100962.8">
    <molecule id="A4UUI3-1"/>
    <property type="protein sequence ID" value="ENSMUSP00000098522.4"/>
    <property type="gene ID" value="ENSMUSG00000079363.8"/>
</dbReference>
<dbReference type="GeneID" id="17472"/>
<dbReference type="KEGG" id="mmu:17472"/>
<dbReference type="UCSC" id="uc008yky.2">
    <molecule id="A4UUI3-1"/>
    <property type="organism name" value="mouse"/>
</dbReference>
<dbReference type="AGR" id="MGI:97072"/>
<dbReference type="CTD" id="115361"/>
<dbReference type="MGI" id="MGI:97072">
    <property type="gene designation" value="Gbp4"/>
</dbReference>
<dbReference type="VEuPathDB" id="HostDB:ENSMUSG00000079363"/>
<dbReference type="eggNOG" id="KOG2037">
    <property type="taxonomic scope" value="Eukaryota"/>
</dbReference>
<dbReference type="GeneTree" id="ENSGT00940000154265"/>
<dbReference type="HOGENOM" id="CLU_018608_2_2_1"/>
<dbReference type="InParanoid" id="A4UUI3"/>
<dbReference type="OMA" id="MGTINHY"/>
<dbReference type="OrthoDB" id="2135133at2759"/>
<dbReference type="TreeFam" id="TF331602"/>
<dbReference type="BioGRID-ORCS" id="17472">
    <property type="hits" value="4 hits in 79 CRISPR screens"/>
</dbReference>
<dbReference type="ChiTaRS" id="Gbp4">
    <property type="organism name" value="mouse"/>
</dbReference>
<dbReference type="PRO" id="PR:A4UUI3"/>
<dbReference type="Proteomes" id="UP000000589">
    <property type="component" value="Chromosome 5"/>
</dbReference>
<dbReference type="RNAct" id="A4UUI3">
    <property type="molecule type" value="protein"/>
</dbReference>
<dbReference type="Bgee" id="ENSMUSG00000079363">
    <property type="expression patterns" value="Expressed in thymus and 57 other cell types or tissues"/>
</dbReference>
<dbReference type="ExpressionAtlas" id="A4UUI3">
    <property type="expression patterns" value="baseline and differential"/>
</dbReference>
<dbReference type="GO" id="GO:0000139">
    <property type="term" value="C:Golgi membrane"/>
    <property type="evidence" value="ECO:0007669"/>
    <property type="project" value="UniProtKB-SubCell"/>
</dbReference>
<dbReference type="GO" id="GO:0005634">
    <property type="term" value="C:nucleus"/>
    <property type="evidence" value="ECO:0007669"/>
    <property type="project" value="UniProtKB-SubCell"/>
</dbReference>
<dbReference type="GO" id="GO:0048471">
    <property type="term" value="C:perinuclear region of cytoplasm"/>
    <property type="evidence" value="ECO:0007669"/>
    <property type="project" value="UniProtKB-SubCell"/>
</dbReference>
<dbReference type="GO" id="GO:0005525">
    <property type="term" value="F:GTP binding"/>
    <property type="evidence" value="ECO:0007669"/>
    <property type="project" value="UniProtKB-KW"/>
</dbReference>
<dbReference type="GO" id="GO:0003924">
    <property type="term" value="F:GTPase activity"/>
    <property type="evidence" value="ECO:0007669"/>
    <property type="project" value="InterPro"/>
</dbReference>
<dbReference type="GO" id="GO:0055105">
    <property type="term" value="F:ubiquitin-protein transferase inhibitor activity"/>
    <property type="evidence" value="ECO:0000314"/>
    <property type="project" value="UniProt"/>
</dbReference>
<dbReference type="GO" id="GO:0071346">
    <property type="term" value="P:cellular response to type II interferon"/>
    <property type="evidence" value="ECO:0000314"/>
    <property type="project" value="MGI"/>
</dbReference>
<dbReference type="GO" id="GO:0032687">
    <property type="term" value="P:negative regulation of interferon-alpha production"/>
    <property type="evidence" value="ECO:0000314"/>
    <property type="project" value="UniProt"/>
</dbReference>
<dbReference type="GO" id="GO:0042308">
    <property type="term" value="P:negative regulation of protein import into nucleus"/>
    <property type="evidence" value="ECO:0000314"/>
    <property type="project" value="MGI"/>
</dbReference>
<dbReference type="GO" id="GO:0031397">
    <property type="term" value="P:negative regulation of protein ubiquitination"/>
    <property type="evidence" value="ECO:0000316"/>
    <property type="project" value="MGI"/>
</dbReference>
<dbReference type="GO" id="GO:0000122">
    <property type="term" value="P:negative regulation of transcription by RNA polymerase II"/>
    <property type="evidence" value="ECO:0000316"/>
    <property type="project" value="MGI"/>
</dbReference>
<dbReference type="GO" id="GO:0050688">
    <property type="term" value="P:regulation of defense response to virus"/>
    <property type="evidence" value="ECO:0000315"/>
    <property type="project" value="MGI"/>
</dbReference>
<dbReference type="CDD" id="cd01851">
    <property type="entry name" value="GBP"/>
    <property type="match status" value="1"/>
</dbReference>
<dbReference type="CDD" id="cd16269">
    <property type="entry name" value="GBP_C"/>
    <property type="match status" value="1"/>
</dbReference>
<dbReference type="FunFam" id="1.20.1000.10:FF:000001">
    <property type="entry name" value="Guanylate binding protein 1"/>
    <property type="match status" value="1"/>
</dbReference>
<dbReference type="FunFam" id="3.40.50.300:FF:000422">
    <property type="entry name" value="Guanylate-binding protein 1"/>
    <property type="match status" value="1"/>
</dbReference>
<dbReference type="Gene3D" id="1.20.1000.10">
    <property type="entry name" value="Guanylate-binding protein, C-terminal domain"/>
    <property type="match status" value="1"/>
</dbReference>
<dbReference type="Gene3D" id="3.40.50.300">
    <property type="entry name" value="P-loop containing nucleotide triphosphate hydrolases"/>
    <property type="match status" value="1"/>
</dbReference>
<dbReference type="InterPro" id="IPR030386">
    <property type="entry name" value="G_GB1_RHD3_dom"/>
</dbReference>
<dbReference type="InterPro" id="IPR037684">
    <property type="entry name" value="GBP_C"/>
</dbReference>
<dbReference type="InterPro" id="IPR003191">
    <property type="entry name" value="Guanylate-bd/ATL_C"/>
</dbReference>
<dbReference type="InterPro" id="IPR036543">
    <property type="entry name" value="Guanylate-bd_C_sf"/>
</dbReference>
<dbReference type="InterPro" id="IPR015894">
    <property type="entry name" value="Guanylate-bd_N"/>
</dbReference>
<dbReference type="InterPro" id="IPR027417">
    <property type="entry name" value="P-loop_NTPase"/>
</dbReference>
<dbReference type="PANTHER" id="PTHR10751">
    <property type="entry name" value="GUANYLATE BINDING PROTEIN"/>
    <property type="match status" value="1"/>
</dbReference>
<dbReference type="Pfam" id="PF02263">
    <property type="entry name" value="GBP"/>
    <property type="match status" value="1"/>
</dbReference>
<dbReference type="Pfam" id="PF02841">
    <property type="entry name" value="GBP_C"/>
    <property type="match status" value="1"/>
</dbReference>
<dbReference type="SUPFAM" id="SSF48340">
    <property type="entry name" value="Interferon-induced guanylate-binding protein 1 (GBP1), C-terminal domain"/>
    <property type="match status" value="1"/>
</dbReference>
<dbReference type="SUPFAM" id="SSF52540">
    <property type="entry name" value="P-loop containing nucleoside triphosphate hydrolases"/>
    <property type="match status" value="1"/>
</dbReference>
<dbReference type="PROSITE" id="PS51715">
    <property type="entry name" value="G_GB1_RHD3"/>
    <property type="match status" value="1"/>
</dbReference>
<evidence type="ECO:0000250" key="1">
    <source>
        <dbReference type="UniProtKB" id="P32455"/>
    </source>
</evidence>
<evidence type="ECO:0000250" key="2">
    <source>
        <dbReference type="UniProtKB" id="Q96PP9"/>
    </source>
</evidence>
<evidence type="ECO:0000255" key="3"/>
<evidence type="ECO:0000255" key="4">
    <source>
        <dbReference type="PROSITE-ProRule" id="PRU01052"/>
    </source>
</evidence>
<evidence type="ECO:0000269" key="5">
    <source>
    </source>
</evidence>
<evidence type="ECO:0000269" key="6">
    <source>
    </source>
</evidence>
<evidence type="ECO:0000303" key="7">
    <source>
    </source>
</evidence>
<evidence type="ECO:0000305" key="8"/>
<evidence type="ECO:0000312" key="9">
    <source>
        <dbReference type="MGI" id="MGI:97072"/>
    </source>
</evidence>
<feature type="chain" id="PRO_0000457892" description="Guanylate-binding protein 4">
    <location>
        <begin position="1"/>
        <end position="631"/>
    </location>
</feature>
<feature type="domain" description="GB1/RHD3-type G" evidence="4">
    <location>
        <begin position="33"/>
        <end position="283"/>
    </location>
</feature>
<feature type="coiled-coil region" evidence="3">
    <location>
        <begin position="492"/>
        <end position="592"/>
    </location>
</feature>
<feature type="binding site" evidence="1">
    <location>
        <begin position="43"/>
        <end position="50"/>
    </location>
    <ligand>
        <name>GTP</name>
        <dbReference type="ChEBI" id="CHEBI:37565"/>
    </ligand>
</feature>
<feature type="binding site" evidence="1">
    <location>
        <begin position="103"/>
        <end position="107"/>
    </location>
    <ligand>
        <name>GTP</name>
        <dbReference type="ChEBI" id="CHEBI:37565"/>
    </ligand>
</feature>
<feature type="splice variant" id="VSP_061850" description="In isoform 2.">
    <location>
        <begin position="1"/>
        <end position="136"/>
    </location>
</feature>
<feature type="sequence conflict" description="In Ref. 2; AAA37668." evidence="8" ref="2">
    <original>SGTLPTSQRFPSGLHRAVSDQGHLDVVHAPPHQARA</original>
    <variation>FPLGSTVQSQTKGIWMWCMPHPTKPEHT</variation>
    <location>
        <begin position="63"/>
        <end position="98"/>
    </location>
</feature>
<name>GBP4_MOUSE</name>
<accession>A4UUI3</accession>
<accession>A0A0G2JDT5</accession>
<accession>A0A0G2JEJ5</accession>
<accession>A0A0G2JGT4</accession>
<accession>B9EJ74</accession>
<accession>Q61594</accession>
<comment type="function">
    <text evidence="5 6">Interferon (IFN)-inducible GTPase that plays important roles in innate immunity against a diverse range of bacterial, viral and protozoan pathogens (PubMed:18025219). Negatively regulates the antiviral response by inhibiting activation of IRF7 transcription factor (PubMed:22095711).</text>
</comment>
<comment type="catalytic activity">
    <reaction evidence="1">
        <text>GTP + H2O = GDP + phosphate + H(+)</text>
        <dbReference type="Rhea" id="RHEA:19669"/>
        <dbReference type="ChEBI" id="CHEBI:15377"/>
        <dbReference type="ChEBI" id="CHEBI:15378"/>
        <dbReference type="ChEBI" id="CHEBI:37565"/>
        <dbReference type="ChEBI" id="CHEBI:43474"/>
        <dbReference type="ChEBI" id="CHEBI:58189"/>
    </reaction>
</comment>
<comment type="subunit">
    <text evidence="2 6">Heterodimer with other family members, including GBP1, GBP2 and GBP5 (By similarity). Dimerization regulates subcellular location (By similarity). Interacts with IRF7; preventing interaction between TRAF6 and IRF7, resulting in impaired TRAF6-mediated IRF7 ubiquitination (PubMed:22095711).</text>
</comment>
<comment type="subcellular location">
    <subcellularLocation>
        <location evidence="2">Golgi apparatus membrane</location>
    </subcellularLocation>
    <subcellularLocation>
        <location evidence="2">Cytoplasm</location>
    </subcellularLocation>
    <subcellularLocation>
        <location evidence="2">Nucleus</location>
    </subcellularLocation>
    <subcellularLocation>
        <location evidence="2">Cytoplasm</location>
        <location evidence="2">Perinuclear region</location>
    </subcellularLocation>
    <text evidence="2">Heterodimers with GBP1, GBP2 and GBP5 localize in the compartment of the prenylated GBPs: with GBP1 in a vesicle-like compartment, with GBP2, around the nucleus and with GBP5, at the Golgi apparatus.</text>
</comment>
<comment type="alternative products">
    <event type="alternative splicing"/>
    <isoform>
        <id>A4UUI3-1</id>
        <name>1</name>
        <sequence type="displayed"/>
    </isoform>
    <isoform>
        <id>A4UUI3-2</id>
        <name>2</name>
        <sequence type="described" ref="VSP_061850"/>
    </isoform>
</comment>
<comment type="tissue specificity">
    <text evidence="6">Mainly expressed in organs of the immune system, such as spleen and lymph nodes.</text>
</comment>
<comment type="induction">
    <text evidence="6">Up-regulated in response to Sendai virus (SeV) infection.</text>
</comment>
<comment type="similarity">
    <text evidence="4">Belongs to the TRAFAC class dynamin-like GTPase superfamily. GB1/RHD3 GTPase family. GB1 subfamily.</text>
</comment>
<keyword id="KW-0025">Alternative splicing</keyword>
<keyword id="KW-0175">Coiled coil</keyword>
<keyword id="KW-0963">Cytoplasm</keyword>
<keyword id="KW-0333">Golgi apparatus</keyword>
<keyword id="KW-0342">GTP-binding</keyword>
<keyword id="KW-0378">Hydrolase</keyword>
<keyword id="KW-0391">Immunity</keyword>
<keyword id="KW-0399">Innate immunity</keyword>
<keyword id="KW-0472">Membrane</keyword>
<keyword id="KW-0547">Nucleotide-binding</keyword>
<keyword id="KW-0539">Nucleus</keyword>
<keyword id="KW-1185">Reference proteome</keyword>